<feature type="chain" id="PRO_0000099274" description="Virion membrane protein A21 homolog">
    <location>
        <begin position="1"/>
        <end position="113"/>
    </location>
</feature>
<feature type="transmembrane region" description="Helical; Signal-anchor for type III membrane protein" evidence="2">
    <location>
        <begin position="1"/>
        <end position="23"/>
    </location>
</feature>
<feature type="topological domain" description="Virion surface" evidence="2">
    <location>
        <begin position="24"/>
        <end position="113"/>
    </location>
</feature>
<accession>Q9J548</accession>
<proteinExistence type="inferred from homology"/>
<comment type="function">
    <text evidence="1">Envelope protein part of the entry-fusion complex responsible for the virus membrane fusion with host cell membrane during virus entry.</text>
</comment>
<comment type="subunit">
    <text evidence="1">Envelope protein part of a stable entry-fusion complex (EFC) which is at least composed of proteins A16, A21, A28, G3, G9, H2, J5, and L5. Formation of the viral membrane is necessary for the assembly of the complex (By similarity).</text>
</comment>
<comment type="subcellular location">
    <subcellularLocation>
        <location evidence="3">Virion membrane</location>
        <topology evidence="3">Single-pass type III membrane protein</topology>
    </subcellularLocation>
    <text evidence="1">Component of the mature virion (MV) membrane. The mature virion is located in the cytoplasm of infected cells and is probably released by cell lysis (By similarity).</text>
</comment>
<comment type="PTM">
    <text evidence="1">Contains two intramolecular disulfide bonds. They are created by the viral disulfide bond formation pathway, a poxvirus-specific pathway that operates on the cytoplasmic side of the MV membranes (By similarity).</text>
</comment>
<comment type="similarity">
    <text evidence="3">Belongs to the chordopoxvirinae A21 family.</text>
</comment>
<evidence type="ECO:0000250" key="1"/>
<evidence type="ECO:0000255" key="2"/>
<evidence type="ECO:0000305" key="3"/>
<gene>
    <name type="ordered locus">FPV186</name>
</gene>
<keyword id="KW-1015">Disulfide bond</keyword>
<keyword id="KW-1168">Fusion of virus membrane with host membrane</keyword>
<keyword id="KW-0472">Membrane</keyword>
<keyword id="KW-1185">Reference proteome</keyword>
<keyword id="KW-0735">Signal-anchor</keyword>
<keyword id="KW-0812">Transmembrane</keyword>
<keyword id="KW-1133">Transmembrane helix</keyword>
<keyword id="KW-0261">Viral envelope protein</keyword>
<keyword id="KW-1162">Viral penetration into host cytoplasm</keyword>
<keyword id="KW-0946">Virion</keyword>
<keyword id="KW-1160">Virus entry into host cell</keyword>
<organismHost>
    <name type="scientific">Vertebrata</name>
    <dbReference type="NCBI Taxonomy" id="7742"/>
</organismHost>
<name>A21_FOWPN</name>
<protein>
    <recommendedName>
        <fullName>Virion membrane protein A21 homolog</fullName>
    </recommendedName>
</protein>
<reference key="1">
    <citation type="journal article" date="2000" name="J. Virol.">
        <title>The genome of fowlpox virus.</title>
        <authorList>
            <person name="Afonso C.L."/>
            <person name="Tulman E.R."/>
            <person name="Lu Z."/>
            <person name="Zsak L."/>
            <person name="Kutish G.F."/>
            <person name="Rock D.L."/>
        </authorList>
    </citation>
    <scope>NUCLEOTIDE SEQUENCE [LARGE SCALE GENOMIC DNA]</scope>
</reference>
<organism>
    <name type="scientific">Fowlpox virus (strain NVSL)</name>
    <name type="common">FPV</name>
    <dbReference type="NCBI Taxonomy" id="928301"/>
    <lineage>
        <taxon>Viruses</taxon>
        <taxon>Varidnaviria</taxon>
        <taxon>Bamfordvirae</taxon>
        <taxon>Nucleocytoviricota</taxon>
        <taxon>Pokkesviricetes</taxon>
        <taxon>Chitovirales</taxon>
        <taxon>Poxviridae</taxon>
        <taxon>Chordopoxvirinae</taxon>
        <taxon>Avipoxvirus</taxon>
        <taxon>Fowlpox virus</taxon>
    </lineage>
</organism>
<dbReference type="EMBL" id="AF198100">
    <property type="protein sequence ID" value="AAF44530.1"/>
    <property type="molecule type" value="Genomic_DNA"/>
</dbReference>
<dbReference type="RefSeq" id="NP_039148.1">
    <property type="nucleotide sequence ID" value="NC_002188.1"/>
</dbReference>
<dbReference type="SMR" id="Q9J548"/>
<dbReference type="GeneID" id="1486758"/>
<dbReference type="KEGG" id="vg:1486758"/>
<dbReference type="Proteomes" id="UP000008597">
    <property type="component" value="Segment"/>
</dbReference>
<dbReference type="GO" id="GO:0016020">
    <property type="term" value="C:membrane"/>
    <property type="evidence" value="ECO:0007669"/>
    <property type="project" value="UniProtKB-KW"/>
</dbReference>
<dbReference type="GO" id="GO:0019031">
    <property type="term" value="C:viral envelope"/>
    <property type="evidence" value="ECO:0007669"/>
    <property type="project" value="UniProtKB-KW"/>
</dbReference>
<dbReference type="GO" id="GO:0055036">
    <property type="term" value="C:virion membrane"/>
    <property type="evidence" value="ECO:0007669"/>
    <property type="project" value="UniProtKB-SubCell"/>
</dbReference>
<dbReference type="GO" id="GO:0039663">
    <property type="term" value="P:membrane fusion involved in viral entry into host cell"/>
    <property type="evidence" value="ECO:0007669"/>
    <property type="project" value="UniProtKB-KW"/>
</dbReference>
<dbReference type="GO" id="GO:0046718">
    <property type="term" value="P:symbiont entry into host cell"/>
    <property type="evidence" value="ECO:0007669"/>
    <property type="project" value="UniProtKB-KW"/>
</dbReference>
<dbReference type="InterPro" id="IPR007987">
    <property type="entry name" value="Poxvirus_A21"/>
</dbReference>
<dbReference type="Pfam" id="PF05323">
    <property type="entry name" value="Pox_A21"/>
    <property type="match status" value="1"/>
</dbReference>
<sequence length="113" mass="13210">MFVLFLIVCYFILIFNIIVPKIADKLRLEHEAFTKYRQIYGNKFRCIGDNLINYSFTPFGVKANYLVNKNTKMPAICNDIKNINSLIAVTCDDASKFIKHRNICERAYTELFL</sequence>